<dbReference type="EMBL" id="AE000782">
    <property type="protein sequence ID" value="AAB90446.1"/>
    <property type="molecule type" value="Genomic_DNA"/>
</dbReference>
<dbReference type="PIR" id="C69350">
    <property type="entry name" value="C69350"/>
</dbReference>
<dbReference type="PaxDb" id="224325-AF_0803"/>
<dbReference type="EnsemblBacteria" id="AAB90446">
    <property type="protein sequence ID" value="AAB90446"/>
    <property type="gene ID" value="AF_0803"/>
</dbReference>
<dbReference type="KEGG" id="afu:AF_0803"/>
<dbReference type="HOGENOM" id="CLU_3414443_0_0_2"/>
<dbReference type="Proteomes" id="UP000002199">
    <property type="component" value="Chromosome"/>
</dbReference>
<gene>
    <name type="ordered locus">AF_0803</name>
</gene>
<proteinExistence type="predicted"/>
<name>Y803_ARCFU</name>
<reference key="1">
    <citation type="journal article" date="1997" name="Nature">
        <title>The complete genome sequence of the hyperthermophilic, sulphate-reducing archaeon Archaeoglobus fulgidus.</title>
        <authorList>
            <person name="Klenk H.-P."/>
            <person name="Clayton R.A."/>
            <person name="Tomb J.-F."/>
            <person name="White O."/>
            <person name="Nelson K.E."/>
            <person name="Ketchum K.A."/>
            <person name="Dodson R.J."/>
            <person name="Gwinn M.L."/>
            <person name="Hickey E.K."/>
            <person name="Peterson J.D."/>
            <person name="Richardson D.L."/>
            <person name="Kerlavage A.R."/>
            <person name="Graham D.E."/>
            <person name="Kyrpides N.C."/>
            <person name="Fleischmann R.D."/>
            <person name="Quackenbush J."/>
            <person name="Lee N.H."/>
            <person name="Sutton G.G."/>
            <person name="Gill S.R."/>
            <person name="Kirkness E.F."/>
            <person name="Dougherty B.A."/>
            <person name="McKenney K."/>
            <person name="Adams M.D."/>
            <person name="Loftus B.J."/>
            <person name="Peterson S.N."/>
            <person name="Reich C.I."/>
            <person name="McNeil L.K."/>
            <person name="Badger J.H."/>
            <person name="Glodek A."/>
            <person name="Zhou L."/>
            <person name="Overbeek R."/>
            <person name="Gocayne J.D."/>
            <person name="Weidman J.F."/>
            <person name="McDonald L.A."/>
            <person name="Utterback T.R."/>
            <person name="Cotton M.D."/>
            <person name="Spriggs T."/>
            <person name="Artiach P."/>
            <person name="Kaine B.P."/>
            <person name="Sykes S.M."/>
            <person name="Sadow P.W."/>
            <person name="D'Andrea K.P."/>
            <person name="Bowman C."/>
            <person name="Fujii C."/>
            <person name="Garland S.A."/>
            <person name="Mason T.M."/>
            <person name="Olsen G.J."/>
            <person name="Fraser C.M."/>
            <person name="Smith H.O."/>
            <person name="Woese C.R."/>
            <person name="Venter J.C."/>
        </authorList>
    </citation>
    <scope>NUCLEOTIDE SEQUENCE [LARGE SCALE GENOMIC DNA]</scope>
    <source>
        <strain>ATCC 49558 / DSM 4304 / JCM 9628 / NBRC 100126 / VC-16</strain>
    </source>
</reference>
<feature type="chain" id="PRO_0000127927" description="Uncharacterized protein AF_0803">
    <location>
        <begin position="1"/>
        <end position="27"/>
    </location>
</feature>
<keyword id="KW-1185">Reference proteome</keyword>
<sequence length="27" mass="3203">MRDVTVVATSKFNIVKNRIKAERWVKI</sequence>
<accession>O29455</accession>
<protein>
    <recommendedName>
        <fullName>Uncharacterized protein AF_0803</fullName>
    </recommendedName>
</protein>
<organism>
    <name type="scientific">Archaeoglobus fulgidus (strain ATCC 49558 / DSM 4304 / JCM 9628 / NBRC 100126 / VC-16)</name>
    <dbReference type="NCBI Taxonomy" id="224325"/>
    <lineage>
        <taxon>Archaea</taxon>
        <taxon>Methanobacteriati</taxon>
        <taxon>Methanobacteriota</taxon>
        <taxon>Archaeoglobi</taxon>
        <taxon>Archaeoglobales</taxon>
        <taxon>Archaeoglobaceae</taxon>
        <taxon>Archaeoglobus</taxon>
    </lineage>
</organism>